<keyword id="KW-0106">Calcium</keyword>
<keyword id="KW-1015">Disulfide bond</keyword>
<keyword id="KW-0378">Hydrolase</keyword>
<keyword id="KW-0442">Lipid degradation</keyword>
<keyword id="KW-0443">Lipid metabolism</keyword>
<keyword id="KW-0479">Metal-binding</keyword>
<keyword id="KW-1185">Reference proteome</keyword>
<keyword id="KW-0964">Secreted</keyword>
<keyword id="KW-0732">Signal</keyword>
<protein>
    <recommendedName>
        <fullName>Basic phospholipase A2 PC16</fullName>
        <shortName>svPLA2</shortName>
        <ecNumber>3.1.1.4</ecNumber>
    </recommendedName>
    <alternativeName>
        <fullName>Phosphatidylcholine 2-acylhydrolase</fullName>
    </alternativeName>
</protein>
<comment type="function">
    <text evidence="1">PLA2 catalyzes the calcium-dependent hydrolysis of the 2-acyl groups in 3-sn-phosphoglycerides.</text>
</comment>
<comment type="catalytic activity">
    <reaction evidence="3 4">
        <text>a 1,2-diacyl-sn-glycero-3-phosphocholine + H2O = a 1-acyl-sn-glycero-3-phosphocholine + a fatty acid + H(+)</text>
        <dbReference type="Rhea" id="RHEA:15801"/>
        <dbReference type="ChEBI" id="CHEBI:15377"/>
        <dbReference type="ChEBI" id="CHEBI:15378"/>
        <dbReference type="ChEBI" id="CHEBI:28868"/>
        <dbReference type="ChEBI" id="CHEBI:57643"/>
        <dbReference type="ChEBI" id="CHEBI:58168"/>
        <dbReference type="EC" id="3.1.1.4"/>
    </reaction>
</comment>
<comment type="cofactor">
    <cofactor evidence="1">
        <name>Ca(2+)</name>
        <dbReference type="ChEBI" id="CHEBI:29108"/>
    </cofactor>
    <text evidence="1">Binds 1 Ca(2+) ion.</text>
</comment>
<comment type="subcellular location">
    <subcellularLocation>
        <location evidence="1">Secreted</location>
    </subcellularLocation>
</comment>
<comment type="similarity">
    <text evidence="5">Belongs to the phospholipase A2 family. Group I subfamily. D49 sub-subfamily.</text>
</comment>
<name>PA2BG_LATLA</name>
<proteinExistence type="inferred from homology"/>
<dbReference type="EC" id="3.1.1.4"/>
<dbReference type="EMBL" id="AB062443">
    <property type="protein sequence ID" value="BAB72250.1"/>
    <property type="molecule type" value="Genomic_DNA"/>
</dbReference>
<dbReference type="SMR" id="Q8UUI2"/>
<dbReference type="Proteomes" id="UP000694406">
    <property type="component" value="Unplaced"/>
</dbReference>
<dbReference type="GO" id="GO:0005576">
    <property type="term" value="C:extracellular region"/>
    <property type="evidence" value="ECO:0007669"/>
    <property type="project" value="UniProtKB-SubCell"/>
</dbReference>
<dbReference type="GO" id="GO:0005509">
    <property type="term" value="F:calcium ion binding"/>
    <property type="evidence" value="ECO:0007669"/>
    <property type="project" value="InterPro"/>
</dbReference>
<dbReference type="GO" id="GO:0047498">
    <property type="term" value="F:calcium-dependent phospholipase A2 activity"/>
    <property type="evidence" value="ECO:0007669"/>
    <property type="project" value="TreeGrafter"/>
</dbReference>
<dbReference type="GO" id="GO:0005543">
    <property type="term" value="F:phospholipid binding"/>
    <property type="evidence" value="ECO:0007669"/>
    <property type="project" value="TreeGrafter"/>
</dbReference>
<dbReference type="GO" id="GO:0050482">
    <property type="term" value="P:arachidonate secretion"/>
    <property type="evidence" value="ECO:0007669"/>
    <property type="project" value="InterPro"/>
</dbReference>
<dbReference type="GO" id="GO:0016042">
    <property type="term" value="P:lipid catabolic process"/>
    <property type="evidence" value="ECO:0007669"/>
    <property type="project" value="UniProtKB-KW"/>
</dbReference>
<dbReference type="GO" id="GO:0006644">
    <property type="term" value="P:phospholipid metabolic process"/>
    <property type="evidence" value="ECO:0007669"/>
    <property type="project" value="InterPro"/>
</dbReference>
<dbReference type="CDD" id="cd00125">
    <property type="entry name" value="PLA2c"/>
    <property type="match status" value="1"/>
</dbReference>
<dbReference type="FunFam" id="1.20.90.10:FF:000007">
    <property type="entry name" value="Acidic phospholipase A2"/>
    <property type="match status" value="1"/>
</dbReference>
<dbReference type="Gene3D" id="1.20.90.10">
    <property type="entry name" value="Phospholipase A2 domain"/>
    <property type="match status" value="1"/>
</dbReference>
<dbReference type="InterPro" id="IPR001211">
    <property type="entry name" value="PLipase_A2"/>
</dbReference>
<dbReference type="InterPro" id="IPR033112">
    <property type="entry name" value="PLipase_A2_Asp_AS"/>
</dbReference>
<dbReference type="InterPro" id="IPR016090">
    <property type="entry name" value="PLipase_A2_dom"/>
</dbReference>
<dbReference type="InterPro" id="IPR036444">
    <property type="entry name" value="PLipase_A2_dom_sf"/>
</dbReference>
<dbReference type="InterPro" id="IPR033113">
    <property type="entry name" value="PLipase_A2_His_AS"/>
</dbReference>
<dbReference type="PANTHER" id="PTHR11716:SF51">
    <property type="entry name" value="PHOSPHOLIPASE A2"/>
    <property type="match status" value="1"/>
</dbReference>
<dbReference type="PANTHER" id="PTHR11716">
    <property type="entry name" value="PHOSPHOLIPASE A2 FAMILY MEMBER"/>
    <property type="match status" value="1"/>
</dbReference>
<dbReference type="Pfam" id="PF00068">
    <property type="entry name" value="Phospholip_A2_1"/>
    <property type="match status" value="1"/>
</dbReference>
<dbReference type="PRINTS" id="PR00389">
    <property type="entry name" value="PHPHLIPASEA2"/>
</dbReference>
<dbReference type="SMART" id="SM00085">
    <property type="entry name" value="PA2c"/>
    <property type="match status" value="1"/>
</dbReference>
<dbReference type="SUPFAM" id="SSF48619">
    <property type="entry name" value="Phospholipase A2, PLA2"/>
    <property type="match status" value="1"/>
</dbReference>
<dbReference type="PROSITE" id="PS00119">
    <property type="entry name" value="PA2_ASP"/>
    <property type="match status" value="1"/>
</dbReference>
<dbReference type="PROSITE" id="PS00118">
    <property type="entry name" value="PA2_HIS"/>
    <property type="match status" value="1"/>
</dbReference>
<organism>
    <name type="scientific">Laticauda laticaudata</name>
    <name type="common">Blue-ringed sea krait</name>
    <name type="synonym">Blue-lipped sea krait</name>
    <dbReference type="NCBI Taxonomy" id="8630"/>
    <lineage>
        <taxon>Eukaryota</taxon>
        <taxon>Metazoa</taxon>
        <taxon>Chordata</taxon>
        <taxon>Craniata</taxon>
        <taxon>Vertebrata</taxon>
        <taxon>Euteleostomi</taxon>
        <taxon>Lepidosauria</taxon>
        <taxon>Squamata</taxon>
        <taxon>Bifurcata</taxon>
        <taxon>Unidentata</taxon>
        <taxon>Episquamata</taxon>
        <taxon>Toxicofera</taxon>
        <taxon>Serpentes</taxon>
        <taxon>Colubroidea</taxon>
        <taxon>Elapidae</taxon>
        <taxon>Laticaudinae</taxon>
        <taxon>Laticauda</taxon>
    </lineage>
</organism>
<sequence>MYPAHLLLLLAVCVSLLGASAIPPLPLNLIQFTYLIECANKGRRTSFNYADYGCYCGIGGSGTPVDKLDRCCKTHDECYAQAEKKGCYPKLTMYNYYCGGGGPYCNSKTECQRFVCDCDVRAADCFARYPYNNKNYNINTSNRCK</sequence>
<accession>Q8UUI2</accession>
<reference key="1">
    <citation type="journal article" date="2002" name="Toxicon">
        <title>A comparative analysis of invaded sequences from group IA phospholipase A(2) genes provides evidence about the divergence period of genes groups and snake families.</title>
        <authorList>
            <person name="Fujimi T.J."/>
            <person name="Tsuchiya T."/>
            <person name="Tamiya T."/>
        </authorList>
    </citation>
    <scope>NUCLEOTIDE SEQUENCE [GENOMIC DNA]</scope>
    <source>
        <tissue>Liver</tissue>
    </source>
</reference>
<feature type="signal peptide" evidence="2">
    <location>
        <begin position="1"/>
        <end position="21"/>
    </location>
</feature>
<feature type="propeptide" id="PRO_0000022892" evidence="1">
    <location>
        <begin position="22"/>
        <end position="27"/>
    </location>
</feature>
<feature type="chain" id="PRO_0000022893" description="Basic phospholipase A2 PC16">
    <location>
        <begin position="28"/>
        <end position="145"/>
    </location>
</feature>
<feature type="active site" evidence="1">
    <location>
        <position position="75"/>
    </location>
</feature>
<feature type="active site" evidence="1">
    <location>
        <position position="119"/>
    </location>
</feature>
<feature type="binding site" evidence="1">
    <location>
        <position position="55"/>
    </location>
    <ligand>
        <name>Ca(2+)</name>
        <dbReference type="ChEBI" id="CHEBI:29108"/>
    </ligand>
</feature>
<feature type="binding site" evidence="1">
    <location>
        <position position="57"/>
    </location>
    <ligand>
        <name>Ca(2+)</name>
        <dbReference type="ChEBI" id="CHEBI:29108"/>
    </ligand>
</feature>
<feature type="binding site" evidence="1">
    <location>
        <position position="59"/>
    </location>
    <ligand>
        <name>Ca(2+)</name>
        <dbReference type="ChEBI" id="CHEBI:29108"/>
    </ligand>
</feature>
<feature type="binding site" evidence="1">
    <location>
        <position position="76"/>
    </location>
    <ligand>
        <name>Ca(2+)</name>
        <dbReference type="ChEBI" id="CHEBI:29108"/>
    </ligand>
</feature>
<feature type="disulfide bond" evidence="1">
    <location>
        <begin position="38"/>
        <end position="98"/>
    </location>
</feature>
<feature type="disulfide bond" evidence="1">
    <location>
        <begin position="54"/>
        <end position="144"/>
    </location>
</feature>
<feature type="disulfide bond" evidence="1">
    <location>
        <begin position="56"/>
        <end position="72"/>
    </location>
</feature>
<feature type="disulfide bond" evidence="1">
    <location>
        <begin position="71"/>
        <end position="125"/>
    </location>
</feature>
<feature type="disulfide bond" evidence="1">
    <location>
        <begin position="78"/>
        <end position="118"/>
    </location>
</feature>
<feature type="disulfide bond" evidence="1">
    <location>
        <begin position="87"/>
        <end position="111"/>
    </location>
</feature>
<feature type="disulfide bond" evidence="1">
    <location>
        <begin position="105"/>
        <end position="116"/>
    </location>
</feature>
<evidence type="ECO:0000250" key="1"/>
<evidence type="ECO:0000255" key="2"/>
<evidence type="ECO:0000255" key="3">
    <source>
        <dbReference type="PROSITE-ProRule" id="PRU10035"/>
    </source>
</evidence>
<evidence type="ECO:0000255" key="4">
    <source>
        <dbReference type="PROSITE-ProRule" id="PRU10036"/>
    </source>
</evidence>
<evidence type="ECO:0000305" key="5"/>